<keyword id="KW-0119">Carbohydrate metabolism</keyword>
<keyword id="KW-0413">Isomerase</keyword>
<keyword id="KW-1185">Reference proteome</keyword>
<organism>
    <name type="scientific">Thermoplasma acidophilum (strain ATCC 25905 / DSM 1728 / JCM 9062 / NBRC 15155 / AMRC-C165)</name>
    <dbReference type="NCBI Taxonomy" id="273075"/>
    <lineage>
        <taxon>Archaea</taxon>
        <taxon>Methanobacteriati</taxon>
        <taxon>Thermoplasmatota</taxon>
        <taxon>Thermoplasmata</taxon>
        <taxon>Thermoplasmatales</taxon>
        <taxon>Thermoplasmataceae</taxon>
        <taxon>Thermoplasma</taxon>
    </lineage>
</organism>
<proteinExistence type="evidence at protein level"/>
<evidence type="ECO:0000250" key="1">
    <source>
        <dbReference type="UniProtKB" id="Q8ZWV0"/>
    </source>
</evidence>
<evidence type="ECO:0000255" key="2">
    <source>
        <dbReference type="PROSITE-ProRule" id="PRU00797"/>
    </source>
</evidence>
<evidence type="ECO:0000269" key="3">
    <source>
    </source>
</evidence>
<evidence type="ECO:0000303" key="4">
    <source>
    </source>
</evidence>
<evidence type="ECO:0000305" key="5"/>
<sequence>MLRSHCMEFSEELKTLKDQVRFDGSFRTGTFSNIVIAGMGGSGIAGRIFSEMYSAKPVFVCDDYHIPEFVDGNTEFIAVSYSGNTEETLSAAEEAIKKGAKVHAITSGGRLSEMGVDTIKIPGGLQPRSAVGYLTMPIINTFIRPKHEDIEEAAGLLSDLDKNNTVQENIATEIYAGRRIPVIYGSTPYRSVAYRWKTQFNENAKILAYSNYFSELNHNDTMPLRDTYRKDEFYFMAFDSTDERIRKRIEVTQKITGTSFKKIEARGSSLIARIFYLIHFGDYVTYHLARIRNVDPQDVSAIEDLKKRIS</sequence>
<comment type="function">
    <text evidence="3">Dual specificity isomerase that catalyzes the isomerization of both glucose-6-phosphate and mannose-6-phosphate to fructose-6-phosphate with similar catalytic efficiency.</text>
</comment>
<comment type="catalytic activity">
    <reaction evidence="3">
        <text>alpha-D-glucose 6-phosphate = beta-D-fructose 6-phosphate</text>
        <dbReference type="Rhea" id="RHEA:11816"/>
        <dbReference type="ChEBI" id="CHEBI:57634"/>
        <dbReference type="ChEBI" id="CHEBI:58225"/>
        <dbReference type="EC" id="5.3.1.9"/>
    </reaction>
</comment>
<comment type="catalytic activity">
    <reaction evidence="3">
        <text>D-mannose 6-phosphate = D-fructose 6-phosphate</text>
        <dbReference type="Rhea" id="RHEA:12356"/>
        <dbReference type="ChEBI" id="CHEBI:58735"/>
        <dbReference type="ChEBI" id="CHEBI:61527"/>
        <dbReference type="EC" id="5.3.1.8"/>
    </reaction>
</comment>
<comment type="activity regulation">
    <text evidence="3">Inhibited by low concentrations of erythrose 4-phosphate and 6-phosphogluconate.</text>
</comment>
<comment type="biophysicochemical properties">
    <kinetics>
        <KM evidence="3">0.72 mM for glucose 6-phosphate</KM>
        <KM evidence="3">0.2 mM for fructose 6-phosphate</KM>
        <KM evidence="3">0.25 mM for mannose 6-phosphate</KM>
        <Vmax evidence="3">83.0 mmol/min/mg enzyme with glucose 6-phosphate as substrate (at 50 degrees Celsius)</Vmax>
        <Vmax evidence="3">57.0 mmol/min/mg enzyme with fructose 6-phosphate as substrate (at 50 degrees Celsius)</Vmax>
        <Vmax evidence="3">75.0 mmol/min/mg enzyme with mannose 6-phosphate as substrate (at 50 degrees Celsius)</Vmax>
    </kinetics>
    <phDependence>
        <text evidence="3">Optimum pH is 7.6.</text>
    </phDependence>
    <temperatureDependence>
        <text evidence="3">Optimum temperature is 75 degrees Celsius.</text>
    </temperatureDependence>
</comment>
<comment type="subunit">
    <text evidence="3">Homodimer.</text>
</comment>
<comment type="similarity">
    <text evidence="5">Belongs to the PGI/PMI family.</text>
</comment>
<protein>
    <recommendedName>
        <fullName evidence="4">Bifunctional phosphoglucose/phosphomannose isomerase</fullName>
        <shortName evidence="4">Bifunctional PGI/PMI</shortName>
        <ecNumber evidence="3">5.3.1.8</ecNumber>
        <ecNumber evidence="3">5.3.1.9</ecNumber>
    </recommendedName>
    <alternativeName>
        <fullName>Glucose-6-phosphate isomerase</fullName>
        <shortName>GPI</shortName>
    </alternativeName>
    <alternativeName>
        <fullName>Mannose-6-phosphate isomerase</fullName>
    </alternativeName>
</protein>
<gene>
    <name type="ordered locus">Ta1419</name>
</gene>
<accession>Q9HIC2</accession>
<dbReference type="EC" id="5.3.1.8" evidence="3"/>
<dbReference type="EC" id="5.3.1.9" evidence="3"/>
<dbReference type="EMBL" id="AL445067">
    <property type="protein sequence ID" value="CAC12539.1"/>
    <property type="molecule type" value="Genomic_DNA"/>
</dbReference>
<dbReference type="SMR" id="Q9HIC2"/>
<dbReference type="FunCoup" id="Q9HIC2">
    <property type="interactions" value="75"/>
</dbReference>
<dbReference type="STRING" id="273075.gene:9572646"/>
<dbReference type="PaxDb" id="273075-Ta1419"/>
<dbReference type="EnsemblBacteria" id="CAC12539">
    <property type="protein sequence ID" value="CAC12539"/>
    <property type="gene ID" value="CAC12539"/>
</dbReference>
<dbReference type="KEGG" id="tac:Ta1419"/>
<dbReference type="eggNOG" id="arCOG00052">
    <property type="taxonomic scope" value="Archaea"/>
</dbReference>
<dbReference type="HOGENOM" id="CLU_059687_0_0_2"/>
<dbReference type="InParanoid" id="Q9HIC2"/>
<dbReference type="OrthoDB" id="10151at2157"/>
<dbReference type="BRENDA" id="5.3.1.8">
    <property type="organism ID" value="6324"/>
</dbReference>
<dbReference type="BRENDA" id="5.3.1.9">
    <property type="organism ID" value="6324"/>
</dbReference>
<dbReference type="SABIO-RK" id="Q9HIC2"/>
<dbReference type="Proteomes" id="UP000001024">
    <property type="component" value="Chromosome"/>
</dbReference>
<dbReference type="GO" id="GO:0097367">
    <property type="term" value="F:carbohydrate derivative binding"/>
    <property type="evidence" value="ECO:0007669"/>
    <property type="project" value="InterPro"/>
</dbReference>
<dbReference type="GO" id="GO:0004347">
    <property type="term" value="F:glucose-6-phosphate isomerase activity"/>
    <property type="evidence" value="ECO:0007669"/>
    <property type="project" value="UniProtKB-EC"/>
</dbReference>
<dbReference type="GO" id="GO:0004476">
    <property type="term" value="F:mannose-6-phosphate isomerase activity"/>
    <property type="evidence" value="ECO:0007669"/>
    <property type="project" value="UniProtKB-EC"/>
</dbReference>
<dbReference type="GO" id="GO:1901135">
    <property type="term" value="P:carbohydrate derivative metabolic process"/>
    <property type="evidence" value="ECO:0007669"/>
    <property type="project" value="InterPro"/>
</dbReference>
<dbReference type="GO" id="GO:0005975">
    <property type="term" value="P:carbohydrate metabolic process"/>
    <property type="evidence" value="ECO:0007669"/>
    <property type="project" value="InterPro"/>
</dbReference>
<dbReference type="CDD" id="cd05017">
    <property type="entry name" value="SIS_PGI_PMI_1"/>
    <property type="match status" value="1"/>
</dbReference>
<dbReference type="CDD" id="cd05637">
    <property type="entry name" value="SIS_PGI_PMI_2"/>
    <property type="match status" value="1"/>
</dbReference>
<dbReference type="Gene3D" id="3.40.50.10490">
    <property type="entry name" value="Glucose-6-phosphate isomerase like protein, domain 1"/>
    <property type="match status" value="2"/>
</dbReference>
<dbReference type="InterPro" id="IPR019490">
    <property type="entry name" value="Glu6P/Mann6P_isomerase_C"/>
</dbReference>
<dbReference type="InterPro" id="IPR001347">
    <property type="entry name" value="SIS_dom"/>
</dbReference>
<dbReference type="InterPro" id="IPR046348">
    <property type="entry name" value="SIS_dom_sf"/>
</dbReference>
<dbReference type="InterPro" id="IPR035484">
    <property type="entry name" value="SIS_PGI/PMI_1"/>
</dbReference>
<dbReference type="NCBIfam" id="TIGR02128">
    <property type="entry name" value="G6PI_arch"/>
    <property type="match status" value="1"/>
</dbReference>
<dbReference type="NCBIfam" id="NF006423">
    <property type="entry name" value="PRK08674.1-2"/>
    <property type="match status" value="1"/>
</dbReference>
<dbReference type="Pfam" id="PF10432">
    <property type="entry name" value="bact-PGI_C"/>
    <property type="match status" value="1"/>
</dbReference>
<dbReference type="SUPFAM" id="SSF53697">
    <property type="entry name" value="SIS domain"/>
    <property type="match status" value="1"/>
</dbReference>
<dbReference type="PROSITE" id="PS51464">
    <property type="entry name" value="SIS"/>
    <property type="match status" value="1"/>
</dbReference>
<name>PGMI_THEAC</name>
<reference key="1">
    <citation type="journal article" date="2000" name="Nature">
        <title>The genome sequence of the thermoacidophilic scavenger Thermoplasma acidophilum.</title>
        <authorList>
            <person name="Ruepp A."/>
            <person name="Graml W."/>
            <person name="Santos-Martinez M.-L."/>
            <person name="Koretke K.K."/>
            <person name="Volker C."/>
            <person name="Mewes H.-W."/>
            <person name="Frishman D."/>
            <person name="Stocker S."/>
            <person name="Lupas A.N."/>
            <person name="Baumeister W."/>
        </authorList>
    </citation>
    <scope>NUCLEOTIDE SEQUENCE [LARGE SCALE GENOMIC DNA]</scope>
    <source>
        <strain>ATCC 25905 / DSM 1728 / JCM 9062 / NBRC 15155 / AMRC-C165</strain>
    </source>
</reference>
<reference key="2">
    <citation type="journal article" date="2004" name="J. Biol. Chem.">
        <title>Bifunctional phosphoglucose/phosphomannose isomerases from the archaea Aeropyrum pernix and Thermoplasma acidophilum constitute a novel enzyme family within the phosphoglucose isomerase superfamily.</title>
        <authorList>
            <person name="Hansen T."/>
            <person name="Wendor ff D."/>
            <person name="Schoenheit P."/>
        </authorList>
    </citation>
    <scope>FUNCTION</scope>
    <scope>CATALYTIC ACTIVITY</scope>
    <scope>ACTIVITY REGULATION</scope>
    <scope>BIOPHYSICOCHEMICAL PROPERTIES</scope>
    <scope>SUBUNIT</scope>
</reference>
<feature type="chain" id="PRO_0000227545" description="Bifunctional phosphoglucose/phosphomannose isomerase">
    <location>
        <begin position="1"/>
        <end position="310"/>
    </location>
</feature>
<feature type="domain" description="SIS" evidence="2">
    <location>
        <begin position="22"/>
        <end position="152"/>
    </location>
</feature>
<feature type="active site" description="Proton acceptor" evidence="1">
    <location>
        <position position="202"/>
    </location>
</feature>
<feature type="active site" description="Proton donor" evidence="1">
    <location>
        <position position="218"/>
    </location>
</feature>
<feature type="active site" description="Proton acceptor" evidence="1">
    <location>
        <position position="306"/>
    </location>
</feature>
<feature type="binding site" evidence="1">
    <location>
        <position position="41"/>
    </location>
    <ligand>
        <name>D-fructose 6-phosphate</name>
        <dbReference type="ChEBI" id="CHEBI:61527"/>
    </ligand>
</feature>
<feature type="binding site" evidence="1">
    <location>
        <position position="42"/>
    </location>
    <ligand>
        <name>D-fructose 6-phosphate</name>
        <dbReference type="ChEBI" id="CHEBI:61527"/>
    </ligand>
</feature>
<feature type="binding site" evidence="1">
    <location>
        <position position="80"/>
    </location>
    <ligand>
        <name>D-fructose 6-phosphate</name>
        <dbReference type="ChEBI" id="CHEBI:61527"/>
    </ligand>
</feature>
<feature type="binding site" evidence="1">
    <location>
        <position position="82"/>
    </location>
    <ligand>
        <name>D-fructose 6-phosphate</name>
        <dbReference type="ChEBI" id="CHEBI:61527"/>
    </ligand>
</feature>
<feature type="binding site" evidence="1">
    <location>
        <position position="85"/>
    </location>
    <ligand>
        <name>D-fructose 6-phosphate</name>
        <dbReference type="ChEBI" id="CHEBI:61527"/>
    </ligand>
</feature>
<feature type="binding site" evidence="1">
    <location>
        <position position="128"/>
    </location>
    <ligand>
        <name>D-fructose 6-phosphate</name>
        <dbReference type="ChEBI" id="CHEBI:61527"/>
    </ligand>
</feature>
<feature type="binding site" evidence="1">
    <location>
        <position position="218"/>
    </location>
    <ligand>
        <name>D-fructose 6-phosphate</name>
        <dbReference type="ChEBI" id="CHEBI:61527"/>
    </ligand>
</feature>
<feature type="binding site" evidence="1">
    <location>
        <position position="306"/>
    </location>
    <ligand>
        <name>D-fructose 6-phosphate</name>
        <dbReference type="ChEBI" id="CHEBI:61527"/>
    </ligand>
</feature>